<evidence type="ECO:0000250" key="1"/>
<evidence type="ECO:0000269" key="2">
    <source>
    </source>
</evidence>
<evidence type="ECO:0000305" key="3"/>
<dbReference type="EMBL" id="AE000512">
    <property type="protein sequence ID" value="AAD36490.1"/>
    <property type="status" value="ALT_INIT"/>
    <property type="molecule type" value="Genomic_DNA"/>
</dbReference>
<dbReference type="PIR" id="A72256">
    <property type="entry name" value="A72256"/>
</dbReference>
<dbReference type="RefSeq" id="NP_229220.1">
    <property type="nucleotide sequence ID" value="NC_000853.1"/>
</dbReference>
<dbReference type="RefSeq" id="WP_012311059.1">
    <property type="nucleotide sequence ID" value="NZ_CP011107.1"/>
</dbReference>
<dbReference type="SMR" id="Q9X1D7"/>
<dbReference type="STRING" id="243274.TM_1420"/>
<dbReference type="PaxDb" id="243274-THEMA_07210"/>
<dbReference type="EnsemblBacteria" id="AAD36490">
    <property type="protein sequence ID" value="AAD36490"/>
    <property type="gene ID" value="TM_1420"/>
</dbReference>
<dbReference type="KEGG" id="tma:TM1420"/>
<dbReference type="KEGG" id="tmi:THEMA_07210"/>
<dbReference type="KEGG" id="tmw:THMA_1451"/>
<dbReference type="PATRIC" id="fig|243274.18.peg.1393"/>
<dbReference type="eggNOG" id="COG1905">
    <property type="taxonomic scope" value="Bacteria"/>
</dbReference>
<dbReference type="InParanoid" id="Q9X1D7"/>
<dbReference type="OrthoDB" id="9807975at2"/>
<dbReference type="Proteomes" id="UP000008183">
    <property type="component" value="Chromosome"/>
</dbReference>
<dbReference type="GO" id="GO:0051537">
    <property type="term" value="F:2 iron, 2 sulfur cluster binding"/>
    <property type="evidence" value="ECO:0007669"/>
    <property type="project" value="UniProtKB-KW"/>
</dbReference>
<dbReference type="GO" id="GO:0046872">
    <property type="term" value="F:metal ion binding"/>
    <property type="evidence" value="ECO:0007669"/>
    <property type="project" value="UniProtKB-KW"/>
</dbReference>
<dbReference type="CDD" id="cd02980">
    <property type="entry name" value="TRX_Fd_family"/>
    <property type="match status" value="1"/>
</dbReference>
<dbReference type="Gene3D" id="3.40.30.10">
    <property type="entry name" value="Glutaredoxin"/>
    <property type="match status" value="1"/>
</dbReference>
<dbReference type="InterPro" id="IPR036249">
    <property type="entry name" value="Thioredoxin-like_sf"/>
</dbReference>
<dbReference type="Pfam" id="PF01257">
    <property type="entry name" value="2Fe-2S_thioredx"/>
    <property type="match status" value="1"/>
</dbReference>
<dbReference type="SUPFAM" id="SSF52833">
    <property type="entry name" value="Thioredoxin-like"/>
    <property type="match status" value="1"/>
</dbReference>
<protein>
    <recommendedName>
        <fullName>Protein TM_1420</fullName>
    </recommendedName>
</protein>
<keyword id="KW-0001">2Fe-2S</keyword>
<keyword id="KW-0408">Iron</keyword>
<keyword id="KW-0411">Iron-sulfur</keyword>
<keyword id="KW-0479">Metal-binding</keyword>
<keyword id="KW-1185">Reference proteome</keyword>
<proteinExistence type="evidence at protein level"/>
<gene>
    <name type="ordered locus">TM_1420</name>
</gene>
<comment type="function">
    <text>Might be part of a multi-protein complex, possibly involved in metal cluster assembly.</text>
</comment>
<comment type="cofactor">
    <cofactor>
        <name>[2Fe-2S] cluster</name>
        <dbReference type="ChEBI" id="CHEBI:190135"/>
    </cofactor>
    <text>Binds 1 [2Fe-2S] cluster.</text>
</comment>
<comment type="biophysicochemical properties">
    <redoxPotential>
        <text evidence="2">E(0) is 233 mV at pH 6.5 and 25 degrees Celsius, -296 mV at 80 degrees Celsius.</text>
    </redoxPotential>
    <temperatureDependence>
        <text evidence="2">Not very thermostable.</text>
    </temperatureDependence>
</comment>
<comment type="mass spectrometry" mass="8537.0" error="3.0" method="Unknown" evidence="2"/>
<comment type="sequence caution" evidence="3">
    <conflict type="erroneous initiation">
        <sequence resource="EMBL-CDS" id="AAD36490"/>
    </conflict>
</comment>
<feature type="chain" id="PRO_0000318590" description="Protein TM_1420">
    <location>
        <begin position="1"/>
        <end position="75"/>
    </location>
</feature>
<feature type="binding site" evidence="1">
    <location>
        <position position="6"/>
    </location>
    <ligand>
        <name>[2Fe-2S] cluster</name>
        <dbReference type="ChEBI" id="CHEBI:190135"/>
    </ligand>
</feature>
<feature type="binding site" evidence="1">
    <location>
        <position position="11"/>
    </location>
    <ligand>
        <name>[2Fe-2S] cluster</name>
        <dbReference type="ChEBI" id="CHEBI:190135"/>
    </ligand>
</feature>
<feature type="binding site" evidence="1">
    <location>
        <position position="39"/>
    </location>
    <ligand>
        <name>[2Fe-2S] cluster</name>
        <dbReference type="ChEBI" id="CHEBI:190135"/>
    </ligand>
</feature>
<feature type="binding site" evidence="1">
    <location>
        <position position="43"/>
    </location>
    <ligand>
        <name>[2Fe-2S] cluster</name>
        <dbReference type="ChEBI" id="CHEBI:190135"/>
    </ligand>
</feature>
<accession>Q9X1D7</accession>
<organism>
    <name type="scientific">Thermotoga maritima (strain ATCC 43589 / DSM 3109 / JCM 10099 / NBRC 100826 / MSB8)</name>
    <dbReference type="NCBI Taxonomy" id="243274"/>
    <lineage>
        <taxon>Bacteria</taxon>
        <taxon>Thermotogati</taxon>
        <taxon>Thermotogota</taxon>
        <taxon>Thermotogae</taxon>
        <taxon>Thermotogales</taxon>
        <taxon>Thermotogaceae</taxon>
        <taxon>Thermotoga</taxon>
    </lineage>
</organism>
<sequence length="75" mass="8536">MIVRVCMGSSCHLKGSYEVVRRFQELQKKYNFKLYGSLCFGNCSQGVCVEIDGRLFSRVTPENAEEILKKVLQNG</sequence>
<name>Y1420_THEMA</name>
<reference key="1">
    <citation type="journal article" date="1999" name="Nature">
        <title>Evidence for lateral gene transfer between Archaea and Bacteria from genome sequence of Thermotoga maritima.</title>
        <authorList>
            <person name="Nelson K.E."/>
            <person name="Clayton R.A."/>
            <person name="Gill S.R."/>
            <person name="Gwinn M.L."/>
            <person name="Dodson R.J."/>
            <person name="Haft D.H."/>
            <person name="Hickey E.K."/>
            <person name="Peterson J.D."/>
            <person name="Nelson W.C."/>
            <person name="Ketchum K.A."/>
            <person name="McDonald L.A."/>
            <person name="Utterback T.R."/>
            <person name="Malek J.A."/>
            <person name="Linher K.D."/>
            <person name="Garrett M.M."/>
            <person name="Stewart A.M."/>
            <person name="Cotton M.D."/>
            <person name="Pratt M.S."/>
            <person name="Phillips C.A."/>
            <person name="Richardson D.L."/>
            <person name="Heidelberg J.F."/>
            <person name="Sutton G.G."/>
            <person name="Fleischmann R.D."/>
            <person name="Eisen J.A."/>
            <person name="White O."/>
            <person name="Salzberg S.L."/>
            <person name="Smith H.O."/>
            <person name="Venter J.C."/>
            <person name="Fraser C.M."/>
        </authorList>
    </citation>
    <scope>NUCLEOTIDE SEQUENCE [LARGE SCALE GENOMIC DNA]</scope>
    <source>
        <strain>ATCC 43589 / DSM 3109 / JCM 10099 / NBRC 100826 / MSB8</strain>
    </source>
</reference>
<reference key="2">
    <citation type="journal article" date="2003" name="J. Biol. Inorg. Chem.">
        <title>Characterization of a [2Fe-2S] protein encoded in the iron-hydrogenase operon of Thermotoga maritima.</title>
        <authorList>
            <person name="Pan G."/>
            <person name="Menon A.L."/>
            <person name="Adams M.W.W."/>
        </authorList>
    </citation>
    <scope>MASS SPECTROMETRY</scope>
    <scope>PRESENCE OF A [2FE--2S] CLUSTER</scope>
    <scope>BIOPHYSICOCHEMICAL PROPERTIES</scope>
    <source>
        <strain>ATCC 43589 / DSM 3109 / JCM 10099 / NBRC 100826 / MSB8</strain>
    </source>
</reference>